<organism>
    <name type="scientific">Helicobacter pylori (strain G27)</name>
    <dbReference type="NCBI Taxonomy" id="563041"/>
    <lineage>
        <taxon>Bacteria</taxon>
        <taxon>Pseudomonadati</taxon>
        <taxon>Campylobacterota</taxon>
        <taxon>Epsilonproteobacteria</taxon>
        <taxon>Campylobacterales</taxon>
        <taxon>Helicobacteraceae</taxon>
        <taxon>Helicobacter</taxon>
    </lineage>
</organism>
<name>Y782_HELPG</name>
<feature type="chain" id="PRO_1000091245" description="UPF0102 protein HPG27_782">
    <location>
        <begin position="1"/>
        <end position="114"/>
    </location>
</feature>
<protein>
    <recommendedName>
        <fullName evidence="1">UPF0102 protein HPG27_782</fullName>
    </recommendedName>
</protein>
<keyword id="KW-1185">Reference proteome</keyword>
<evidence type="ECO:0000255" key="1">
    <source>
        <dbReference type="HAMAP-Rule" id="MF_00048"/>
    </source>
</evidence>
<dbReference type="EMBL" id="CP001173">
    <property type="protein sequence ID" value="ACI27537.1"/>
    <property type="molecule type" value="Genomic_DNA"/>
</dbReference>
<dbReference type="RefSeq" id="WP_001210426.1">
    <property type="nucleotide sequence ID" value="NC_011333.1"/>
</dbReference>
<dbReference type="SMR" id="B5Z7I8"/>
<dbReference type="KEGG" id="hpg:HPG27_782"/>
<dbReference type="HOGENOM" id="CLU_115353_3_2_7"/>
<dbReference type="Proteomes" id="UP000001735">
    <property type="component" value="Chromosome"/>
</dbReference>
<dbReference type="GO" id="GO:0003676">
    <property type="term" value="F:nucleic acid binding"/>
    <property type="evidence" value="ECO:0007669"/>
    <property type="project" value="InterPro"/>
</dbReference>
<dbReference type="Gene3D" id="3.40.1350.10">
    <property type="match status" value="1"/>
</dbReference>
<dbReference type="HAMAP" id="MF_00048">
    <property type="entry name" value="UPF0102"/>
    <property type="match status" value="1"/>
</dbReference>
<dbReference type="InterPro" id="IPR011335">
    <property type="entry name" value="Restrct_endonuc-II-like"/>
</dbReference>
<dbReference type="InterPro" id="IPR011856">
    <property type="entry name" value="tRNA_endonuc-like_dom_sf"/>
</dbReference>
<dbReference type="InterPro" id="IPR003509">
    <property type="entry name" value="UPF0102_YraN-like"/>
</dbReference>
<dbReference type="NCBIfam" id="NF009152">
    <property type="entry name" value="PRK12497.2-4"/>
    <property type="match status" value="1"/>
</dbReference>
<dbReference type="PANTHER" id="PTHR34039">
    <property type="entry name" value="UPF0102 PROTEIN YRAN"/>
    <property type="match status" value="1"/>
</dbReference>
<dbReference type="PANTHER" id="PTHR34039:SF1">
    <property type="entry name" value="UPF0102 PROTEIN YRAN"/>
    <property type="match status" value="1"/>
</dbReference>
<dbReference type="Pfam" id="PF02021">
    <property type="entry name" value="UPF0102"/>
    <property type="match status" value="1"/>
</dbReference>
<dbReference type="SUPFAM" id="SSF52980">
    <property type="entry name" value="Restriction endonuclease-like"/>
    <property type="match status" value="1"/>
</dbReference>
<accession>B5Z7I8</accession>
<comment type="similarity">
    <text evidence="1">Belongs to the UPF0102 family.</text>
</comment>
<reference key="1">
    <citation type="journal article" date="2009" name="J. Bacteriol.">
        <title>The complete genome sequence of Helicobacter pylori strain G27.</title>
        <authorList>
            <person name="Baltrus D.A."/>
            <person name="Amieva M.R."/>
            <person name="Covacci A."/>
            <person name="Lowe T.M."/>
            <person name="Merrell D.S."/>
            <person name="Ottemann K.M."/>
            <person name="Stein M."/>
            <person name="Salama N.R."/>
            <person name="Guillemin K."/>
        </authorList>
    </citation>
    <scope>NUCLEOTIDE SEQUENCE [LARGE SCALE GENOMIC DNA]</scope>
    <source>
        <strain>G27</strain>
    </source>
</reference>
<gene>
    <name type="ordered locus">HPG27_782</name>
</gene>
<proteinExistence type="inferred from homology"/>
<sequence>MRFFNNKHRAKGLKAEEEACGFLKTLGFEMVERNFFSQFGEIDIIALKKGVLHFIEVKSGENFDPIYAITPSKLKKMIKTIRCYFSQKDPNSDFCIDALIVKNGKFELLENITF</sequence>